<proteinExistence type="evidence at transcript level"/>
<name>ZN426_RAT</name>
<sequence length="553" mass="63005">MAAPDSLSHGPSGDSVCLQEEKVSAEMMLVDCLTNYQELVSFDDVIVDFTQEEWTSLNPDQRTLYREVMLENYKNLATVGYQLIKPSVISWLEQEEFSTGQKIVFPEWKIQLETQCSASQQELLRGNISNGMQTQTGSDTGRGLCDGTQYGDFFSELSPLRTVMKTRPAQDNYDSSQCRKDFLMLQRKKCAGEKLSEFNQSEETGAIPGKAYQKMATQEKCFECSDCGKSFMNQSHLQTHQRTHSGDKLYELNECGRSFINSRLAVLIETLNAKKPHRCKECGKGYRYPAYLNIHMRTHTGEKPYECKECGKAFNYSNSFQIHGRTHTGEKPYVCNQCGKAFTQHSGLSIHVRSHNGDKPYACKECGKAFLTSSRLIQHIRTHTGEKPFVCVKCGKAFAISSNLNGHLKMHAEEKTCECKICGKAFGYLSCLNNHMRTHNAKKSYTCKECGKAFNYSTHLKIHMRIHTGEKPYECKQCGKAFSHSTSFQIHERTHTGEKPYECKECGKAFICPSSFRIHEISHTHTEEKPYKCQQCGKAYSHPRSLRRHERIH</sequence>
<keyword id="KW-0238">DNA-binding</keyword>
<keyword id="KW-0479">Metal-binding</keyword>
<keyword id="KW-0539">Nucleus</keyword>
<keyword id="KW-1185">Reference proteome</keyword>
<keyword id="KW-0677">Repeat</keyword>
<keyword id="KW-0804">Transcription</keyword>
<keyword id="KW-0805">Transcription regulation</keyword>
<keyword id="KW-0862">Zinc</keyword>
<keyword id="KW-0863">Zinc-finger</keyword>
<accession>A1L1L7</accession>
<feature type="chain" id="PRO_0000284701" description="Zinc finger protein 426">
    <location>
        <begin position="1"/>
        <end position="553"/>
    </location>
</feature>
<feature type="domain" description="KRAB" evidence="2">
    <location>
        <begin position="40"/>
        <end position="111"/>
    </location>
</feature>
<feature type="zinc finger region" description="C2H2-type 1" evidence="1">
    <location>
        <begin position="222"/>
        <end position="244"/>
    </location>
</feature>
<feature type="zinc finger region" description="C2H2-type 2" evidence="1">
    <location>
        <begin position="277"/>
        <end position="299"/>
    </location>
</feature>
<feature type="zinc finger region" description="C2H2-type 3" evidence="1">
    <location>
        <begin position="305"/>
        <end position="327"/>
    </location>
</feature>
<feature type="zinc finger region" description="C2H2-type 4" evidence="1">
    <location>
        <begin position="333"/>
        <end position="355"/>
    </location>
</feature>
<feature type="zinc finger region" description="C2H2-type 5" evidence="1">
    <location>
        <begin position="361"/>
        <end position="383"/>
    </location>
</feature>
<feature type="zinc finger region" description="C2H2-type 6" evidence="1">
    <location>
        <begin position="389"/>
        <end position="411"/>
    </location>
</feature>
<feature type="zinc finger region" description="C2H2-type 7" evidence="1">
    <location>
        <begin position="417"/>
        <end position="439"/>
    </location>
</feature>
<feature type="zinc finger region" description="C2H2-type 8" evidence="1">
    <location>
        <begin position="445"/>
        <end position="467"/>
    </location>
</feature>
<feature type="zinc finger region" description="C2H2-type 9" evidence="1">
    <location>
        <begin position="473"/>
        <end position="495"/>
    </location>
</feature>
<feature type="zinc finger region" description="C2H2-type 10" evidence="1">
    <location>
        <begin position="501"/>
        <end position="525"/>
    </location>
</feature>
<feature type="zinc finger region" description="C2H2-type 11" evidence="1">
    <location>
        <begin position="531"/>
        <end position="553"/>
    </location>
</feature>
<dbReference type="EMBL" id="BC129125">
    <property type="protein sequence ID" value="AAI29126.1"/>
    <property type="molecule type" value="mRNA"/>
</dbReference>
<dbReference type="RefSeq" id="NP_001073412.1">
    <property type="nucleotide sequence ID" value="NM_001079943.1"/>
</dbReference>
<dbReference type="RefSeq" id="XP_006242728.1">
    <property type="nucleotide sequence ID" value="XM_006242666.1"/>
</dbReference>
<dbReference type="RefSeq" id="XP_006242729.1">
    <property type="nucleotide sequence ID" value="XM_006242667.3"/>
</dbReference>
<dbReference type="RefSeq" id="XP_006242730.1">
    <property type="nucleotide sequence ID" value="XM_006242668.3"/>
</dbReference>
<dbReference type="RefSeq" id="XP_006242732.1">
    <property type="nucleotide sequence ID" value="XM_006242670.2"/>
</dbReference>
<dbReference type="RefSeq" id="XP_008764203.1">
    <property type="nucleotide sequence ID" value="XM_008765981.2"/>
</dbReference>
<dbReference type="SMR" id="A1L1L7"/>
<dbReference type="FunCoup" id="A1L1L7">
    <property type="interactions" value="357"/>
</dbReference>
<dbReference type="STRING" id="10116.ENSRNOP00000069966"/>
<dbReference type="PhosphoSitePlus" id="A1L1L7"/>
<dbReference type="PaxDb" id="10116-ENSRNOP00000038875"/>
<dbReference type="Ensembl" id="ENSRNOT00000117071.1">
    <property type="protein sequence ID" value="ENSRNOP00000084731.1"/>
    <property type="gene ID" value="ENSRNOG00000033624.4"/>
</dbReference>
<dbReference type="GeneID" id="690895"/>
<dbReference type="KEGG" id="rno:690895"/>
<dbReference type="UCSC" id="RGD:1308643">
    <property type="organism name" value="rat"/>
</dbReference>
<dbReference type="AGR" id="RGD:1590942"/>
<dbReference type="CTD" id="235028"/>
<dbReference type="RGD" id="1590942">
    <property type="gene designation" value="Zfp426"/>
</dbReference>
<dbReference type="eggNOG" id="KOG1721">
    <property type="taxonomic scope" value="Eukaryota"/>
</dbReference>
<dbReference type="GeneTree" id="ENSGT00940000163292"/>
<dbReference type="HOGENOM" id="CLU_002678_0_2_1"/>
<dbReference type="InParanoid" id="A1L1L7"/>
<dbReference type="PhylomeDB" id="A1L1L7"/>
<dbReference type="TreeFam" id="TF342172"/>
<dbReference type="Reactome" id="R-RNO-212436">
    <property type="pathway name" value="Generic Transcription Pathway"/>
</dbReference>
<dbReference type="PRO" id="PR:A1L1L7"/>
<dbReference type="Proteomes" id="UP000002494">
    <property type="component" value="Chromosome 8"/>
</dbReference>
<dbReference type="Bgee" id="ENSRNOG00000033624">
    <property type="expression patterns" value="Expressed in cerebellum and 20 other cell types or tissues"/>
</dbReference>
<dbReference type="ExpressionAtlas" id="A1L1L7">
    <property type="expression patterns" value="baseline and differential"/>
</dbReference>
<dbReference type="GO" id="GO:0005634">
    <property type="term" value="C:nucleus"/>
    <property type="evidence" value="ECO:0000318"/>
    <property type="project" value="GO_Central"/>
</dbReference>
<dbReference type="GO" id="GO:0000981">
    <property type="term" value="F:DNA-binding transcription factor activity, RNA polymerase II-specific"/>
    <property type="evidence" value="ECO:0000318"/>
    <property type="project" value="GO_Central"/>
</dbReference>
<dbReference type="GO" id="GO:0000978">
    <property type="term" value="F:RNA polymerase II cis-regulatory region sequence-specific DNA binding"/>
    <property type="evidence" value="ECO:0000318"/>
    <property type="project" value="GO_Central"/>
</dbReference>
<dbReference type="GO" id="GO:0008270">
    <property type="term" value="F:zinc ion binding"/>
    <property type="evidence" value="ECO:0007669"/>
    <property type="project" value="UniProtKB-KW"/>
</dbReference>
<dbReference type="GO" id="GO:0006357">
    <property type="term" value="P:regulation of transcription by RNA polymerase II"/>
    <property type="evidence" value="ECO:0000318"/>
    <property type="project" value="GO_Central"/>
</dbReference>
<dbReference type="CDD" id="cd07765">
    <property type="entry name" value="KRAB_A-box"/>
    <property type="match status" value="1"/>
</dbReference>
<dbReference type="FunFam" id="3.30.160.60:FF:000097">
    <property type="entry name" value="Zinc finger protein"/>
    <property type="match status" value="1"/>
</dbReference>
<dbReference type="FunFam" id="3.30.160.60:FF:001009">
    <property type="entry name" value="Zinc finger protein 26"/>
    <property type="match status" value="1"/>
</dbReference>
<dbReference type="FunFam" id="3.30.160.60:FF:000184">
    <property type="entry name" value="Zinc finger protein 333"/>
    <property type="match status" value="1"/>
</dbReference>
<dbReference type="FunFam" id="3.30.160.60:FF:000338">
    <property type="entry name" value="zinc finger protein 383"/>
    <property type="match status" value="1"/>
</dbReference>
<dbReference type="FunFam" id="3.30.160.60:FF:001004">
    <property type="entry name" value="Zinc finger protein 426"/>
    <property type="match status" value="1"/>
</dbReference>
<dbReference type="FunFam" id="3.30.160.60:FF:000371">
    <property type="entry name" value="Zinc finger protein 555"/>
    <property type="match status" value="2"/>
</dbReference>
<dbReference type="FunFam" id="3.30.160.60:FF:000156">
    <property type="entry name" value="Zinc finger protein 568"/>
    <property type="match status" value="1"/>
</dbReference>
<dbReference type="FunFam" id="3.30.160.60:FF:001493">
    <property type="entry name" value="zinc finger protein 664"/>
    <property type="match status" value="1"/>
</dbReference>
<dbReference type="FunFam" id="3.30.160.60:FF:000229">
    <property type="entry name" value="Zinc finger protein 90 homolog"/>
    <property type="match status" value="1"/>
</dbReference>
<dbReference type="FunFam" id="3.30.160.60:FF:000309">
    <property type="entry name" value="zinc finger X-chromosomal protein-like"/>
    <property type="match status" value="1"/>
</dbReference>
<dbReference type="Gene3D" id="6.10.140.140">
    <property type="match status" value="1"/>
</dbReference>
<dbReference type="Gene3D" id="3.30.160.60">
    <property type="entry name" value="Classic Zinc Finger"/>
    <property type="match status" value="11"/>
</dbReference>
<dbReference type="InterPro" id="IPR001909">
    <property type="entry name" value="KRAB"/>
</dbReference>
<dbReference type="InterPro" id="IPR036051">
    <property type="entry name" value="KRAB_dom_sf"/>
</dbReference>
<dbReference type="InterPro" id="IPR050331">
    <property type="entry name" value="Zinc_finger"/>
</dbReference>
<dbReference type="InterPro" id="IPR036236">
    <property type="entry name" value="Znf_C2H2_sf"/>
</dbReference>
<dbReference type="InterPro" id="IPR013087">
    <property type="entry name" value="Znf_C2H2_type"/>
</dbReference>
<dbReference type="PANTHER" id="PTHR16515">
    <property type="entry name" value="PR DOMAIN ZINC FINGER PROTEIN"/>
    <property type="match status" value="1"/>
</dbReference>
<dbReference type="PANTHER" id="PTHR16515:SF51">
    <property type="entry name" value="ZINC FINGER PROTEIN 833-RELATED"/>
    <property type="match status" value="1"/>
</dbReference>
<dbReference type="Pfam" id="PF01352">
    <property type="entry name" value="KRAB"/>
    <property type="match status" value="1"/>
</dbReference>
<dbReference type="Pfam" id="PF00096">
    <property type="entry name" value="zf-C2H2"/>
    <property type="match status" value="8"/>
</dbReference>
<dbReference type="Pfam" id="PF13465">
    <property type="entry name" value="zf-H2C2_2"/>
    <property type="match status" value="1"/>
</dbReference>
<dbReference type="SMART" id="SM00349">
    <property type="entry name" value="KRAB"/>
    <property type="match status" value="1"/>
</dbReference>
<dbReference type="SMART" id="SM00355">
    <property type="entry name" value="ZnF_C2H2"/>
    <property type="match status" value="11"/>
</dbReference>
<dbReference type="SUPFAM" id="SSF57667">
    <property type="entry name" value="beta-beta-alpha zinc fingers"/>
    <property type="match status" value="7"/>
</dbReference>
<dbReference type="SUPFAM" id="SSF109640">
    <property type="entry name" value="KRAB domain (Kruppel-associated box)"/>
    <property type="match status" value="1"/>
</dbReference>
<dbReference type="PROSITE" id="PS50805">
    <property type="entry name" value="KRAB"/>
    <property type="match status" value="1"/>
</dbReference>
<dbReference type="PROSITE" id="PS00028">
    <property type="entry name" value="ZINC_FINGER_C2H2_1"/>
    <property type="match status" value="11"/>
</dbReference>
<dbReference type="PROSITE" id="PS50157">
    <property type="entry name" value="ZINC_FINGER_C2H2_2"/>
    <property type="match status" value="11"/>
</dbReference>
<evidence type="ECO:0000255" key="1">
    <source>
        <dbReference type="PROSITE-ProRule" id="PRU00042"/>
    </source>
</evidence>
<evidence type="ECO:0000255" key="2">
    <source>
        <dbReference type="PROSITE-ProRule" id="PRU00119"/>
    </source>
</evidence>
<evidence type="ECO:0000305" key="3"/>
<evidence type="ECO:0000312" key="4">
    <source>
        <dbReference type="EMBL" id="AAI29126.1"/>
    </source>
</evidence>
<comment type="function">
    <text evidence="3">May be involved in transcriptional regulation.</text>
</comment>
<comment type="subcellular location">
    <subcellularLocation>
        <location evidence="3">Nucleus</location>
    </subcellularLocation>
</comment>
<gene>
    <name type="primary">Znf426</name>
    <name type="synonym">Zfp426</name>
</gene>
<reference evidence="4" key="1">
    <citation type="journal article" date="2004" name="Genome Res.">
        <title>The status, quality, and expansion of the NIH full-length cDNA project: the Mammalian Gene Collection (MGC).</title>
        <authorList>
            <consortium name="The MGC Project Team"/>
        </authorList>
    </citation>
    <scope>NUCLEOTIDE SEQUENCE [LARGE SCALE MRNA]</scope>
    <source>
        <tissue evidence="4">Testis</tissue>
    </source>
</reference>
<protein>
    <recommendedName>
        <fullName>Zinc finger protein 426</fullName>
    </recommendedName>
</protein>
<organism>
    <name type="scientific">Rattus norvegicus</name>
    <name type="common">Rat</name>
    <dbReference type="NCBI Taxonomy" id="10116"/>
    <lineage>
        <taxon>Eukaryota</taxon>
        <taxon>Metazoa</taxon>
        <taxon>Chordata</taxon>
        <taxon>Craniata</taxon>
        <taxon>Vertebrata</taxon>
        <taxon>Euteleostomi</taxon>
        <taxon>Mammalia</taxon>
        <taxon>Eutheria</taxon>
        <taxon>Euarchontoglires</taxon>
        <taxon>Glires</taxon>
        <taxon>Rodentia</taxon>
        <taxon>Myomorpha</taxon>
        <taxon>Muroidea</taxon>
        <taxon>Muridae</taxon>
        <taxon>Murinae</taxon>
        <taxon>Rattus</taxon>
    </lineage>
</organism>